<evidence type="ECO:0000255" key="1">
    <source>
        <dbReference type="PROSITE-ProRule" id="PRU00251"/>
    </source>
</evidence>
<evidence type="ECO:0000255" key="2">
    <source>
        <dbReference type="PROSITE-ProRule" id="PRU00629"/>
    </source>
</evidence>
<evidence type="ECO:0000269" key="3">
    <source>
    </source>
</evidence>
<organism>
    <name type="scientific">Solanum lycopersicum</name>
    <name type="common">Tomato</name>
    <name type="synonym">Lycopersicon esculentum</name>
    <dbReference type="NCBI Taxonomy" id="4081"/>
    <lineage>
        <taxon>Eukaryota</taxon>
        <taxon>Viridiplantae</taxon>
        <taxon>Streptophyta</taxon>
        <taxon>Embryophyta</taxon>
        <taxon>Tracheophyta</taxon>
        <taxon>Spermatophyta</taxon>
        <taxon>Magnoliopsida</taxon>
        <taxon>eudicotyledons</taxon>
        <taxon>Gunneridae</taxon>
        <taxon>Pentapetalae</taxon>
        <taxon>asterids</taxon>
        <taxon>lamiids</taxon>
        <taxon>Solanales</taxon>
        <taxon>Solanaceae</taxon>
        <taxon>Solanoideae</taxon>
        <taxon>Solaneae</taxon>
        <taxon>Solanum</taxon>
        <taxon>Solanum subgen. Lycopersicon</taxon>
    </lineage>
</organism>
<feature type="chain" id="PRO_0000441034" description="MADS-box protein 04g005320">
    <location>
        <begin position="1"/>
        <end position="238"/>
    </location>
</feature>
<feature type="domain" description="MADS-box" evidence="1">
    <location>
        <begin position="1"/>
        <end position="61"/>
    </location>
</feature>
<feature type="domain" description="K-box" evidence="2">
    <location>
        <begin position="87"/>
        <end position="177"/>
    </location>
</feature>
<comment type="function">
    <text evidence="3">Probable MADS-box transcription factor that functions with J2 and EJ2 in meristem maturation.</text>
</comment>
<comment type="subcellular location">
    <subcellularLocation>
        <location evidence="1">Nucleus</location>
    </subcellularLocation>
</comment>
<gene>
    <name type="ordered locus">Solyc04g005320</name>
</gene>
<name>MADS4_SOLLC</name>
<reference key="1">
    <citation type="journal article" date="2012" name="Nature">
        <title>The tomato genome sequence provides insights into fleshy fruit evolution.</title>
        <authorList>
            <consortium name="Tomato Genome Consortium"/>
        </authorList>
    </citation>
    <scope>NUCLEOTIDE SEQUENCE [LARGE SCALE GENOMIC DNA]</scope>
    <source>
        <strain>cv. Heinz 1706</strain>
    </source>
</reference>
<reference key="2">
    <citation type="journal article" date="2017" name="Cell">
        <title>Bypassing negative epistasis on yield in tomato imposed by a domestication gene.</title>
        <authorList>
            <person name="Soyk S."/>
            <person name="Lemmon Z.H."/>
            <person name="Oved M."/>
            <person name="Fisher J."/>
            <person name="Liberatore K.L."/>
            <person name="Park S.J."/>
            <person name="Goren A."/>
            <person name="Jiang K."/>
            <person name="Ramos A."/>
            <person name="van der Knaap E."/>
            <person name="Van Eck J."/>
            <person name="Zamir D."/>
            <person name="Eshed Y."/>
            <person name="Lippman Z.B."/>
        </authorList>
    </citation>
    <scope>FUNCTION</scope>
</reference>
<accession>K4BND8</accession>
<sequence>MGRGKVELKRIENKINRQVTFAKRRNGLLKKAYELSILCEAEVALIIFSNRGKLYEFCSTSSMSDTLERYHRCSYGDLETGQSSKDSQNNYQEYMKLKARVEVLQQSQRHILGEDLGQLNTKDLEQLERQLDSSLRLIRSRRTQNMLDQLSDLQQKEQSLLEINRSLKTKLEENSVAHWHITGEQNVQFRQQPAQSEGFFQPLQCNTNIVPNRYNVAPLDSIEPSTQNATGILPGWML</sequence>
<protein>
    <recommendedName>
        <fullName>MADS-box protein 04g005320</fullName>
    </recommendedName>
</protein>
<proteinExistence type="inferred from homology"/>
<keyword id="KW-0238">DNA-binding</keyword>
<keyword id="KW-0539">Nucleus</keyword>
<keyword id="KW-1185">Reference proteome</keyword>
<keyword id="KW-0804">Transcription</keyword>
<keyword id="KW-0805">Transcription regulation</keyword>
<dbReference type="RefSeq" id="XP_004237061.1">
    <property type="nucleotide sequence ID" value="XM_004237013.3"/>
</dbReference>
<dbReference type="SMR" id="K4BND8"/>
<dbReference type="STRING" id="4081.K4BND8"/>
<dbReference type="PaxDb" id="4081-Solyc04g005320.2.1"/>
<dbReference type="EnsemblPlants" id="Solyc04g005320.3.1">
    <property type="protein sequence ID" value="Solyc04g005320.3.1"/>
    <property type="gene ID" value="Solyc04g005320.3"/>
</dbReference>
<dbReference type="Gramene" id="Solyc04g005320.3.1">
    <property type="protein sequence ID" value="Solyc04g005320.3.1"/>
    <property type="gene ID" value="Solyc04g005320.3"/>
</dbReference>
<dbReference type="eggNOG" id="KOG0014">
    <property type="taxonomic scope" value="Eukaryota"/>
</dbReference>
<dbReference type="HOGENOM" id="CLU_053053_0_2_1"/>
<dbReference type="InParanoid" id="K4BND8"/>
<dbReference type="OMA" id="SWETGEQ"/>
<dbReference type="OrthoDB" id="1898716at2759"/>
<dbReference type="PhylomeDB" id="K4BND8"/>
<dbReference type="Proteomes" id="UP000004994">
    <property type="component" value="Chromosome 4"/>
</dbReference>
<dbReference type="GO" id="GO:0005634">
    <property type="term" value="C:nucleus"/>
    <property type="evidence" value="ECO:0007669"/>
    <property type="project" value="UniProtKB-SubCell"/>
</dbReference>
<dbReference type="GO" id="GO:0000981">
    <property type="term" value="F:DNA-binding transcription factor activity, RNA polymerase II-specific"/>
    <property type="evidence" value="ECO:0000318"/>
    <property type="project" value="GO_Central"/>
</dbReference>
<dbReference type="GO" id="GO:0046983">
    <property type="term" value="F:protein dimerization activity"/>
    <property type="evidence" value="ECO:0007669"/>
    <property type="project" value="InterPro"/>
</dbReference>
<dbReference type="GO" id="GO:0000978">
    <property type="term" value="F:RNA polymerase II cis-regulatory region sequence-specific DNA binding"/>
    <property type="evidence" value="ECO:0000318"/>
    <property type="project" value="GO_Central"/>
</dbReference>
<dbReference type="GO" id="GO:0045944">
    <property type="term" value="P:positive regulation of transcription by RNA polymerase II"/>
    <property type="evidence" value="ECO:0007669"/>
    <property type="project" value="InterPro"/>
</dbReference>
<dbReference type="GO" id="GO:0006357">
    <property type="term" value="P:regulation of transcription by RNA polymerase II"/>
    <property type="evidence" value="ECO:0000318"/>
    <property type="project" value="GO_Central"/>
</dbReference>
<dbReference type="CDD" id="cd00265">
    <property type="entry name" value="MADS_MEF2_like"/>
    <property type="match status" value="1"/>
</dbReference>
<dbReference type="FunFam" id="3.40.1810.10:FF:000004">
    <property type="entry name" value="MADS-box transcription factor 1"/>
    <property type="match status" value="1"/>
</dbReference>
<dbReference type="Gene3D" id="3.40.1810.10">
    <property type="entry name" value="Transcription factor, MADS-box"/>
    <property type="match status" value="1"/>
</dbReference>
<dbReference type="InterPro" id="IPR050142">
    <property type="entry name" value="MADS-box/MEF2_TF"/>
</dbReference>
<dbReference type="InterPro" id="IPR033896">
    <property type="entry name" value="MEF2-like_N"/>
</dbReference>
<dbReference type="InterPro" id="IPR002487">
    <property type="entry name" value="TF_Kbox"/>
</dbReference>
<dbReference type="InterPro" id="IPR002100">
    <property type="entry name" value="TF_MADSbox"/>
</dbReference>
<dbReference type="InterPro" id="IPR036879">
    <property type="entry name" value="TF_MADSbox_sf"/>
</dbReference>
<dbReference type="PANTHER" id="PTHR48019">
    <property type="entry name" value="SERUM RESPONSE FACTOR HOMOLOG"/>
    <property type="match status" value="1"/>
</dbReference>
<dbReference type="Pfam" id="PF01486">
    <property type="entry name" value="K-box"/>
    <property type="match status" value="1"/>
</dbReference>
<dbReference type="Pfam" id="PF00319">
    <property type="entry name" value="SRF-TF"/>
    <property type="match status" value="1"/>
</dbReference>
<dbReference type="PRINTS" id="PR00404">
    <property type="entry name" value="MADSDOMAIN"/>
</dbReference>
<dbReference type="SMART" id="SM00432">
    <property type="entry name" value="MADS"/>
    <property type="match status" value="1"/>
</dbReference>
<dbReference type="SUPFAM" id="SSF55455">
    <property type="entry name" value="SRF-like"/>
    <property type="match status" value="1"/>
</dbReference>
<dbReference type="PROSITE" id="PS51297">
    <property type="entry name" value="K_BOX"/>
    <property type="match status" value="1"/>
</dbReference>
<dbReference type="PROSITE" id="PS00350">
    <property type="entry name" value="MADS_BOX_1"/>
    <property type="match status" value="1"/>
</dbReference>
<dbReference type="PROSITE" id="PS50066">
    <property type="entry name" value="MADS_BOX_2"/>
    <property type="match status" value="1"/>
</dbReference>